<protein>
    <recommendedName>
        <fullName>T-cell surface glycoprotein CD1a</fullName>
    </recommendedName>
    <cdAntigenName>CD1a</cdAntigenName>
</protein>
<proteinExistence type="evidence at transcript level"/>
<dbReference type="EMBL" id="AF059492">
    <property type="protein sequence ID" value="AAD26983.1"/>
    <property type="molecule type" value="mRNA"/>
</dbReference>
<dbReference type="EMBL" id="AF056045">
    <property type="protein sequence ID" value="AAF28737.1"/>
    <property type="molecule type" value="Genomic_DNA"/>
</dbReference>
<dbReference type="RefSeq" id="NP_998996.1">
    <property type="nucleotide sequence ID" value="NM_213831.1"/>
</dbReference>
<dbReference type="SMR" id="Q9XS72"/>
<dbReference type="FunCoup" id="Q9XS72">
    <property type="interactions" value="274"/>
</dbReference>
<dbReference type="STRING" id="9823.ENSSSCP00000027437"/>
<dbReference type="GlyCosmos" id="Q9XS72">
    <property type="glycosylation" value="3 sites, No reported glycans"/>
</dbReference>
<dbReference type="GlyGen" id="Q9XS72">
    <property type="glycosylation" value="3 sites"/>
</dbReference>
<dbReference type="PaxDb" id="9823-ENSSSCP00000027437"/>
<dbReference type="GeneID" id="396785"/>
<dbReference type="KEGG" id="ssc:396785"/>
<dbReference type="CTD" id="396785"/>
<dbReference type="eggNOG" id="ENOG502SJH6">
    <property type="taxonomic scope" value="Eukaryota"/>
</dbReference>
<dbReference type="InParanoid" id="Q9XS72"/>
<dbReference type="OrthoDB" id="8890485at2759"/>
<dbReference type="Proteomes" id="UP000008227">
    <property type="component" value="Unplaced"/>
</dbReference>
<dbReference type="Proteomes" id="UP000314985">
    <property type="component" value="Unplaced"/>
</dbReference>
<dbReference type="Proteomes" id="UP000694570">
    <property type="component" value="Unplaced"/>
</dbReference>
<dbReference type="Proteomes" id="UP000694571">
    <property type="component" value="Unplaced"/>
</dbReference>
<dbReference type="Proteomes" id="UP000694720">
    <property type="component" value="Unplaced"/>
</dbReference>
<dbReference type="Proteomes" id="UP000694722">
    <property type="component" value="Unplaced"/>
</dbReference>
<dbReference type="Proteomes" id="UP000694723">
    <property type="component" value="Unplaced"/>
</dbReference>
<dbReference type="Proteomes" id="UP000694724">
    <property type="component" value="Unplaced"/>
</dbReference>
<dbReference type="Proteomes" id="UP000694725">
    <property type="component" value="Unplaced"/>
</dbReference>
<dbReference type="Proteomes" id="UP000694726">
    <property type="component" value="Unplaced"/>
</dbReference>
<dbReference type="Proteomes" id="UP000694727">
    <property type="component" value="Unplaced"/>
</dbReference>
<dbReference type="Proteomes" id="UP000694728">
    <property type="component" value="Unplaced"/>
</dbReference>
<dbReference type="GO" id="GO:0010008">
    <property type="term" value="C:endosome membrane"/>
    <property type="evidence" value="ECO:0007669"/>
    <property type="project" value="UniProtKB-SubCell"/>
</dbReference>
<dbReference type="GO" id="GO:0009897">
    <property type="term" value="C:external side of plasma membrane"/>
    <property type="evidence" value="ECO:0000318"/>
    <property type="project" value="GO_Central"/>
</dbReference>
<dbReference type="GO" id="GO:0005615">
    <property type="term" value="C:extracellular space"/>
    <property type="evidence" value="ECO:0000318"/>
    <property type="project" value="GO_Central"/>
</dbReference>
<dbReference type="GO" id="GO:0045121">
    <property type="term" value="C:membrane raft"/>
    <property type="evidence" value="ECO:0007669"/>
    <property type="project" value="UniProtKB-SubCell"/>
</dbReference>
<dbReference type="GO" id="GO:0030883">
    <property type="term" value="F:endogenous lipid antigen binding"/>
    <property type="evidence" value="ECO:0000318"/>
    <property type="project" value="GO_Central"/>
</dbReference>
<dbReference type="GO" id="GO:0030884">
    <property type="term" value="F:exogenous lipid antigen binding"/>
    <property type="evidence" value="ECO:0000318"/>
    <property type="project" value="GO_Central"/>
</dbReference>
<dbReference type="GO" id="GO:0071723">
    <property type="term" value="F:lipopeptide binding"/>
    <property type="evidence" value="ECO:0000318"/>
    <property type="project" value="GO_Central"/>
</dbReference>
<dbReference type="GO" id="GO:0002250">
    <property type="term" value="P:adaptive immune response"/>
    <property type="evidence" value="ECO:0007669"/>
    <property type="project" value="UniProtKB-KW"/>
</dbReference>
<dbReference type="GO" id="GO:0048006">
    <property type="term" value="P:antigen processing and presentation, endogenous lipid antigen via MHC class Ib"/>
    <property type="evidence" value="ECO:0000318"/>
    <property type="project" value="GO_Central"/>
</dbReference>
<dbReference type="GO" id="GO:0048007">
    <property type="term" value="P:antigen processing and presentation, exogenous lipid antigen via MHC class Ib"/>
    <property type="evidence" value="ECO:0000318"/>
    <property type="project" value="GO_Central"/>
</dbReference>
<dbReference type="GO" id="GO:0006955">
    <property type="term" value="P:immune response"/>
    <property type="evidence" value="ECO:0000318"/>
    <property type="project" value="GO_Central"/>
</dbReference>
<dbReference type="GO" id="GO:0001916">
    <property type="term" value="P:positive regulation of T cell mediated cytotoxicity"/>
    <property type="evidence" value="ECO:0000318"/>
    <property type="project" value="GO_Central"/>
</dbReference>
<dbReference type="CDD" id="cd21029">
    <property type="entry name" value="IgC1_CD1"/>
    <property type="match status" value="1"/>
</dbReference>
<dbReference type="FunFam" id="2.60.40.10:FF:000254">
    <property type="entry name" value="Antigen-presenting glycoprotein CD1d1"/>
    <property type="match status" value="1"/>
</dbReference>
<dbReference type="FunFam" id="3.30.500.10:FF:000002">
    <property type="entry name" value="Antigen-presenting glycoprotein CD1d1"/>
    <property type="match status" value="1"/>
</dbReference>
<dbReference type="Gene3D" id="2.60.40.10">
    <property type="entry name" value="Immunoglobulins"/>
    <property type="match status" value="1"/>
</dbReference>
<dbReference type="Gene3D" id="3.30.500.10">
    <property type="entry name" value="MHC class I-like antigen recognition-like"/>
    <property type="match status" value="1"/>
</dbReference>
<dbReference type="InterPro" id="IPR007110">
    <property type="entry name" value="Ig-like_dom"/>
</dbReference>
<dbReference type="InterPro" id="IPR036179">
    <property type="entry name" value="Ig-like_dom_sf"/>
</dbReference>
<dbReference type="InterPro" id="IPR013783">
    <property type="entry name" value="Ig-like_fold"/>
</dbReference>
<dbReference type="InterPro" id="IPR003597">
    <property type="entry name" value="Ig_C1-set"/>
</dbReference>
<dbReference type="InterPro" id="IPR050208">
    <property type="entry name" value="MHC_class-I_related"/>
</dbReference>
<dbReference type="InterPro" id="IPR011161">
    <property type="entry name" value="MHC_I-like_Ag-recog"/>
</dbReference>
<dbReference type="InterPro" id="IPR037055">
    <property type="entry name" value="MHC_I-like_Ag-recog_sf"/>
</dbReference>
<dbReference type="InterPro" id="IPR011162">
    <property type="entry name" value="MHC_I/II-like_Ag-recog"/>
</dbReference>
<dbReference type="PANTHER" id="PTHR16675">
    <property type="entry name" value="MHC CLASS I-RELATED"/>
    <property type="match status" value="1"/>
</dbReference>
<dbReference type="PANTHER" id="PTHR16675:SF160">
    <property type="entry name" value="T-CELL SURFACE GLYCOPROTEIN CD1A"/>
    <property type="match status" value="1"/>
</dbReference>
<dbReference type="Pfam" id="PF07654">
    <property type="entry name" value="C1-set"/>
    <property type="match status" value="1"/>
</dbReference>
<dbReference type="Pfam" id="PF16497">
    <property type="entry name" value="MHC_I_3"/>
    <property type="match status" value="1"/>
</dbReference>
<dbReference type="SMART" id="SM00407">
    <property type="entry name" value="IGc1"/>
    <property type="match status" value="1"/>
</dbReference>
<dbReference type="SUPFAM" id="SSF48726">
    <property type="entry name" value="Immunoglobulin"/>
    <property type="match status" value="1"/>
</dbReference>
<dbReference type="SUPFAM" id="SSF54452">
    <property type="entry name" value="MHC antigen-recognition domain"/>
    <property type="match status" value="1"/>
</dbReference>
<dbReference type="PROSITE" id="PS50835">
    <property type="entry name" value="IG_LIKE"/>
    <property type="match status" value="1"/>
</dbReference>
<accession>Q9XS72</accession>
<feature type="signal peptide" evidence="3">
    <location>
        <begin position="1"/>
        <end position="18"/>
    </location>
</feature>
<feature type="chain" id="PRO_0000014593" description="T-cell surface glycoprotein CD1a">
    <location>
        <begin position="19"/>
        <end position="339"/>
    </location>
</feature>
<feature type="topological domain" description="Extracellular" evidence="3">
    <location>
        <begin position="19"/>
        <end position="300"/>
    </location>
</feature>
<feature type="transmembrane region" description="Helical" evidence="3">
    <location>
        <begin position="301"/>
        <end position="321"/>
    </location>
</feature>
<feature type="topological domain" description="Cytoplasmic" evidence="3">
    <location>
        <begin position="322"/>
        <end position="339"/>
    </location>
</feature>
<feature type="domain" description="Ig-like">
    <location>
        <begin position="185"/>
        <end position="295"/>
    </location>
</feature>
<feature type="binding site" evidence="2">
    <location>
        <begin position="91"/>
        <end position="95"/>
    </location>
    <ligand>
        <name>a D-galactosylceramide</name>
        <dbReference type="ChEBI" id="CHEBI:36498"/>
    </ligand>
</feature>
<feature type="glycosylation site" description="N-linked (GlcNAc...) asparagine" evidence="3">
    <location>
        <position position="38"/>
    </location>
</feature>
<feature type="glycosylation site" description="N-linked (GlcNAc...) asparagine" evidence="3">
    <location>
        <position position="75"/>
    </location>
</feature>
<feature type="glycosylation site" description="N-linked (GlcNAc...) asparagine" evidence="3">
    <location>
        <position position="146"/>
    </location>
</feature>
<feature type="disulfide bond" evidence="4">
    <location>
        <begin position="120"/>
        <end position="184"/>
    </location>
</feature>
<feature type="disulfide bond" evidence="4">
    <location>
        <begin position="224"/>
        <end position="279"/>
    </location>
</feature>
<reference key="1">
    <citation type="submission" date="1998-04" db="EMBL/GenBank/DDBJ databases">
        <authorList>
            <person name="Chun T."/>
            <person name="Wang K."/>
            <person name="Gaskins H.R."/>
        </authorList>
    </citation>
    <scope>NUCLEOTIDE SEQUENCE [GENOMIC DNA / MRNA]</scope>
</reference>
<sequence>MLFLQLPLLLVLLPGGDSEEGFQEPISFQIIWISSFYNRSWEEEVCSAWLGELQTHRREGKSDIVIYRQPWSKGNFSREDLMESEHILRMFFVRFVQAFFNHASQWKLEYPFDVQIAGGCDLYHGETSVGFVRIAYQGSDFASFQNNSWLPSPKGGTRAQLVCKLFNLYQGTLEIIHKLLSDTCPRFVLGLLDAGKADLQRQVRPEAWLSSGPNPSPGHLMLVCHVSGFYPKPIWVMWMRDEQEQPGTQQGDILPNADGTWYLRVTLDVAAGEASGLSCRVKHSSLGGQDIILYWEQHSSVGWILLAVIVPLVLLTGLAFWHRKHWKHCDPSSALHRLE</sequence>
<keyword id="KW-1064">Adaptive immunity</keyword>
<keyword id="KW-1003">Cell membrane</keyword>
<keyword id="KW-1015">Disulfide bond</keyword>
<keyword id="KW-0967">Endosome</keyword>
<keyword id="KW-0325">Glycoprotein</keyword>
<keyword id="KW-0391">Immunity</keyword>
<keyword id="KW-0393">Immunoglobulin domain</keyword>
<keyword id="KW-0472">Membrane</keyword>
<keyword id="KW-1185">Reference proteome</keyword>
<keyword id="KW-0732">Signal</keyword>
<keyword id="KW-0812">Transmembrane</keyword>
<keyword id="KW-1133">Transmembrane helix</keyword>
<organism>
    <name type="scientific">Sus scrofa</name>
    <name type="common">Pig</name>
    <dbReference type="NCBI Taxonomy" id="9823"/>
    <lineage>
        <taxon>Eukaryota</taxon>
        <taxon>Metazoa</taxon>
        <taxon>Chordata</taxon>
        <taxon>Craniata</taxon>
        <taxon>Vertebrata</taxon>
        <taxon>Euteleostomi</taxon>
        <taxon>Mammalia</taxon>
        <taxon>Eutheria</taxon>
        <taxon>Laurasiatheria</taxon>
        <taxon>Artiodactyla</taxon>
        <taxon>Suina</taxon>
        <taxon>Suidae</taxon>
        <taxon>Sus</taxon>
    </lineage>
</organism>
<name>CD1A_PIG</name>
<comment type="function">
    <text evidence="1">Antigen-presenting protein that binds self and non-self lipid and glycolipid antigens and presents them to T-cell receptors on natural killer T-cells.</text>
</comment>
<comment type="subunit">
    <text evidence="1">Heterodimer with B2M (beta-2-microglobulin). Interacts with CD74 (By similarity).</text>
</comment>
<comment type="subcellular location">
    <subcellularLocation>
        <location evidence="2">Cell membrane</location>
        <topology evidence="3">Single-pass type I membrane protein</topology>
    </subcellularLocation>
    <subcellularLocation>
        <location evidence="2">Membrane raft</location>
        <topology evidence="3">Single-pass type I membrane protein</topology>
    </subcellularLocation>
    <subcellularLocation>
        <location evidence="2">Endosome membrane</location>
        <topology evidence="3">Single-pass type I membrane protein</topology>
    </subcellularLocation>
    <text evidence="2">Subject to intracellular trafficking between the cell membrane and endosomes. Localizes to cell surface lipid rafts.</text>
</comment>
<comment type="miscellaneous">
    <text evidence="1">During protein synthesis and maturation, CD1 family members bind endogenous lipids that are replaced by lipid or glycolipid antigens when the proteins are internalized and pass through endosomes, before trafficking back to the cell surface.</text>
</comment>
<gene>
    <name type="primary">CD1A</name>
    <name type="synonym">CD1.1</name>
</gene>
<evidence type="ECO:0000250" key="1"/>
<evidence type="ECO:0000250" key="2">
    <source>
        <dbReference type="UniProtKB" id="P06126"/>
    </source>
</evidence>
<evidence type="ECO:0000255" key="3"/>
<evidence type="ECO:0000255" key="4">
    <source>
        <dbReference type="PROSITE-ProRule" id="PRU00114"/>
    </source>
</evidence>